<protein>
    <recommendedName>
        <fullName>Cytochrome b</fullName>
    </recommendedName>
    <alternativeName>
        <fullName>Complex III subunit 3</fullName>
    </alternativeName>
    <alternativeName>
        <fullName>Complex III subunit III</fullName>
    </alternativeName>
    <alternativeName>
        <fullName>Cytochrome b-c1 complex subunit 3</fullName>
    </alternativeName>
    <alternativeName>
        <fullName>Ubiquinol-cytochrome-c reductase complex cytochrome b subunit</fullName>
    </alternativeName>
</protein>
<accession>Q9MI32</accession>
<reference key="1">
    <citation type="journal article" date="2000" name="J. Mammal.">
        <title>Molecular systematics of a holarctic rodent (Microtus, Muridae).</title>
        <authorList>
            <person name="Conroy C.J."/>
            <person name="Cook J.A."/>
        </authorList>
    </citation>
    <scope>NUCLEOTIDE SEQUENCE [GENOMIC DNA]</scope>
    <source>
        <strain>Isolate NK 9222</strain>
    </source>
</reference>
<organism>
    <name type="scientific">Microtus mexicanus</name>
    <name type="common">Mexican vole</name>
    <dbReference type="NCBI Taxonomy" id="79689"/>
    <lineage>
        <taxon>Eukaryota</taxon>
        <taxon>Metazoa</taxon>
        <taxon>Chordata</taxon>
        <taxon>Craniata</taxon>
        <taxon>Vertebrata</taxon>
        <taxon>Euteleostomi</taxon>
        <taxon>Mammalia</taxon>
        <taxon>Eutheria</taxon>
        <taxon>Euarchontoglires</taxon>
        <taxon>Glires</taxon>
        <taxon>Rodentia</taxon>
        <taxon>Myomorpha</taxon>
        <taxon>Muroidea</taxon>
        <taxon>Cricetidae</taxon>
        <taxon>Arvicolinae</taxon>
        <taxon>Microtus</taxon>
    </lineage>
</organism>
<geneLocation type="mitochondrion"/>
<evidence type="ECO:0000250" key="1"/>
<evidence type="ECO:0000250" key="2">
    <source>
        <dbReference type="UniProtKB" id="P00157"/>
    </source>
</evidence>
<evidence type="ECO:0000255" key="3">
    <source>
        <dbReference type="PROSITE-ProRule" id="PRU00967"/>
    </source>
</evidence>
<evidence type="ECO:0000255" key="4">
    <source>
        <dbReference type="PROSITE-ProRule" id="PRU00968"/>
    </source>
</evidence>
<gene>
    <name type="primary">MT-CYB</name>
    <name type="synonym">COB</name>
    <name type="synonym">CYTB</name>
    <name type="synonym">MTCYB</name>
</gene>
<proteinExistence type="inferred from homology"/>
<feature type="chain" id="PRO_0000061185" description="Cytochrome b">
    <location>
        <begin position="1"/>
        <end position="380"/>
    </location>
</feature>
<feature type="transmembrane region" description="Helical" evidence="2">
    <location>
        <begin position="33"/>
        <end position="53"/>
    </location>
</feature>
<feature type="transmembrane region" description="Helical" evidence="2">
    <location>
        <begin position="77"/>
        <end position="98"/>
    </location>
</feature>
<feature type="transmembrane region" description="Helical" evidence="2">
    <location>
        <begin position="113"/>
        <end position="133"/>
    </location>
</feature>
<feature type="transmembrane region" description="Helical" evidence="2">
    <location>
        <begin position="178"/>
        <end position="198"/>
    </location>
</feature>
<feature type="transmembrane region" description="Helical" evidence="2">
    <location>
        <begin position="226"/>
        <end position="246"/>
    </location>
</feature>
<feature type="transmembrane region" description="Helical" evidence="2">
    <location>
        <begin position="288"/>
        <end position="308"/>
    </location>
</feature>
<feature type="transmembrane region" description="Helical" evidence="2">
    <location>
        <begin position="320"/>
        <end position="340"/>
    </location>
</feature>
<feature type="transmembrane region" description="Helical" evidence="2">
    <location>
        <begin position="347"/>
        <end position="367"/>
    </location>
</feature>
<feature type="binding site" description="axial binding residue" evidence="2">
    <location>
        <position position="83"/>
    </location>
    <ligand>
        <name>heme b</name>
        <dbReference type="ChEBI" id="CHEBI:60344"/>
        <label>b562</label>
    </ligand>
    <ligandPart>
        <name>Fe</name>
        <dbReference type="ChEBI" id="CHEBI:18248"/>
    </ligandPart>
</feature>
<feature type="binding site" description="axial binding residue" evidence="2">
    <location>
        <position position="97"/>
    </location>
    <ligand>
        <name>heme b</name>
        <dbReference type="ChEBI" id="CHEBI:60344"/>
        <label>b566</label>
    </ligand>
    <ligandPart>
        <name>Fe</name>
        <dbReference type="ChEBI" id="CHEBI:18248"/>
    </ligandPart>
</feature>
<feature type="binding site" description="axial binding residue" evidence="2">
    <location>
        <position position="182"/>
    </location>
    <ligand>
        <name>heme b</name>
        <dbReference type="ChEBI" id="CHEBI:60344"/>
        <label>b562</label>
    </ligand>
    <ligandPart>
        <name>Fe</name>
        <dbReference type="ChEBI" id="CHEBI:18248"/>
    </ligandPart>
</feature>
<feature type="binding site" description="axial binding residue" evidence="2">
    <location>
        <position position="196"/>
    </location>
    <ligand>
        <name>heme b</name>
        <dbReference type="ChEBI" id="CHEBI:60344"/>
        <label>b566</label>
    </ligand>
    <ligandPart>
        <name>Fe</name>
        <dbReference type="ChEBI" id="CHEBI:18248"/>
    </ligandPart>
</feature>
<feature type="binding site" evidence="2">
    <location>
        <position position="201"/>
    </location>
    <ligand>
        <name>a ubiquinone</name>
        <dbReference type="ChEBI" id="CHEBI:16389"/>
    </ligand>
</feature>
<sequence length="380" mass="42894">MTIIRKKHPLIKIINHSFIDLPTPSNISSWWNFGSLLGLCLIIQILTGLFLAMHYTSDTATAFSSVAHICRDVNYGWLIRYLHANGASMFFICLFLHVGRGIYYGSYNMIETWNMGIILLFAVMATAFMGYVLPWGQMSFWGATVITNLLSAIPYVGTTLVEWIWGGFSVDKATLTRFFAFHFILPFIITALVLVHLLFLHETGSNNPTGLNSDADKIPFHPYYTVKDFLGVLLLLMAFMILTLFFPDILGDPDNYTPANPLNTPPHIKPEWYFLFAYAILRSIPNKLGGVLALILSIFILALMPFLHTSKQRTLAFRPITQTMYWILVADLLILTWIGGQPVEYPFVIIGQTASIAYFAIIVIFMPIAGMIENNILDLD</sequence>
<comment type="function">
    <text evidence="2">Component of the ubiquinol-cytochrome c reductase complex (complex III or cytochrome b-c1 complex) that is part of the mitochondrial respiratory chain. The b-c1 complex mediates electron transfer from ubiquinol to cytochrome c. Contributes to the generation of a proton gradient across the mitochondrial membrane that is then used for ATP synthesis.</text>
</comment>
<comment type="cofactor">
    <cofactor evidence="2">
        <name>heme b</name>
        <dbReference type="ChEBI" id="CHEBI:60344"/>
    </cofactor>
    <text evidence="2">Binds 2 heme b groups non-covalently.</text>
</comment>
<comment type="subunit">
    <text evidence="2">The cytochrome bc1 complex contains 11 subunits: 3 respiratory subunits (MT-CYB, CYC1 and UQCRFS1), 2 core proteins (UQCRC1 and UQCRC2) and 6 low-molecular weight proteins (UQCRH/QCR6, UQCRB/QCR7, UQCRQ/QCR8, UQCR10/QCR9, UQCR11/QCR10 and a cleavage product of UQCRFS1). This cytochrome bc1 complex then forms a dimer.</text>
</comment>
<comment type="subcellular location">
    <subcellularLocation>
        <location evidence="2">Mitochondrion inner membrane</location>
        <topology evidence="2">Multi-pass membrane protein</topology>
    </subcellularLocation>
</comment>
<comment type="miscellaneous">
    <text evidence="1">Heme 1 (or BL or b562) is low-potential and absorbs at about 562 nm, and heme 2 (or BH or b566) is high-potential and absorbs at about 566 nm.</text>
</comment>
<comment type="similarity">
    <text evidence="3 4">Belongs to the cytochrome b family.</text>
</comment>
<comment type="caution">
    <text evidence="2">The full-length protein contains only eight transmembrane helices, not nine as predicted by bioinformatics tools.</text>
</comment>
<name>CYB_MICME</name>
<dbReference type="EMBL" id="AF163897">
    <property type="protein sequence ID" value="AAF97421.1"/>
    <property type="molecule type" value="Genomic_DNA"/>
</dbReference>
<dbReference type="SMR" id="Q9MI32"/>
<dbReference type="GO" id="GO:0005743">
    <property type="term" value="C:mitochondrial inner membrane"/>
    <property type="evidence" value="ECO:0007669"/>
    <property type="project" value="UniProtKB-SubCell"/>
</dbReference>
<dbReference type="GO" id="GO:0045275">
    <property type="term" value="C:respiratory chain complex III"/>
    <property type="evidence" value="ECO:0007669"/>
    <property type="project" value="InterPro"/>
</dbReference>
<dbReference type="GO" id="GO:0046872">
    <property type="term" value="F:metal ion binding"/>
    <property type="evidence" value="ECO:0007669"/>
    <property type="project" value="UniProtKB-KW"/>
</dbReference>
<dbReference type="GO" id="GO:0008121">
    <property type="term" value="F:ubiquinol-cytochrome-c reductase activity"/>
    <property type="evidence" value="ECO:0007669"/>
    <property type="project" value="InterPro"/>
</dbReference>
<dbReference type="GO" id="GO:0006122">
    <property type="term" value="P:mitochondrial electron transport, ubiquinol to cytochrome c"/>
    <property type="evidence" value="ECO:0007669"/>
    <property type="project" value="TreeGrafter"/>
</dbReference>
<dbReference type="CDD" id="cd00290">
    <property type="entry name" value="cytochrome_b_C"/>
    <property type="match status" value="1"/>
</dbReference>
<dbReference type="CDD" id="cd00284">
    <property type="entry name" value="Cytochrome_b_N"/>
    <property type="match status" value="1"/>
</dbReference>
<dbReference type="FunFam" id="1.20.810.10:FF:000002">
    <property type="entry name" value="Cytochrome b"/>
    <property type="match status" value="1"/>
</dbReference>
<dbReference type="Gene3D" id="1.20.810.10">
    <property type="entry name" value="Cytochrome Bc1 Complex, Chain C"/>
    <property type="match status" value="1"/>
</dbReference>
<dbReference type="InterPro" id="IPR005798">
    <property type="entry name" value="Cyt_b/b6_C"/>
</dbReference>
<dbReference type="InterPro" id="IPR036150">
    <property type="entry name" value="Cyt_b/b6_C_sf"/>
</dbReference>
<dbReference type="InterPro" id="IPR005797">
    <property type="entry name" value="Cyt_b/b6_N"/>
</dbReference>
<dbReference type="InterPro" id="IPR027387">
    <property type="entry name" value="Cytb/b6-like_sf"/>
</dbReference>
<dbReference type="InterPro" id="IPR030689">
    <property type="entry name" value="Cytochrome_b"/>
</dbReference>
<dbReference type="InterPro" id="IPR048260">
    <property type="entry name" value="Cytochrome_b_C_euk/bac"/>
</dbReference>
<dbReference type="InterPro" id="IPR048259">
    <property type="entry name" value="Cytochrome_b_N_euk/bac"/>
</dbReference>
<dbReference type="InterPro" id="IPR016174">
    <property type="entry name" value="Di-haem_cyt_TM"/>
</dbReference>
<dbReference type="PANTHER" id="PTHR19271">
    <property type="entry name" value="CYTOCHROME B"/>
    <property type="match status" value="1"/>
</dbReference>
<dbReference type="PANTHER" id="PTHR19271:SF16">
    <property type="entry name" value="CYTOCHROME B"/>
    <property type="match status" value="1"/>
</dbReference>
<dbReference type="Pfam" id="PF00032">
    <property type="entry name" value="Cytochrom_B_C"/>
    <property type="match status" value="1"/>
</dbReference>
<dbReference type="Pfam" id="PF00033">
    <property type="entry name" value="Cytochrome_B"/>
    <property type="match status" value="1"/>
</dbReference>
<dbReference type="PIRSF" id="PIRSF038885">
    <property type="entry name" value="COB"/>
    <property type="match status" value="1"/>
</dbReference>
<dbReference type="SUPFAM" id="SSF81648">
    <property type="entry name" value="a domain/subunit of cytochrome bc1 complex (Ubiquinol-cytochrome c reductase)"/>
    <property type="match status" value="1"/>
</dbReference>
<dbReference type="SUPFAM" id="SSF81342">
    <property type="entry name" value="Transmembrane di-heme cytochromes"/>
    <property type="match status" value="1"/>
</dbReference>
<dbReference type="PROSITE" id="PS51003">
    <property type="entry name" value="CYTB_CTER"/>
    <property type="match status" value="1"/>
</dbReference>
<dbReference type="PROSITE" id="PS51002">
    <property type="entry name" value="CYTB_NTER"/>
    <property type="match status" value="1"/>
</dbReference>
<keyword id="KW-0249">Electron transport</keyword>
<keyword id="KW-0349">Heme</keyword>
<keyword id="KW-0408">Iron</keyword>
<keyword id="KW-0472">Membrane</keyword>
<keyword id="KW-0479">Metal-binding</keyword>
<keyword id="KW-0496">Mitochondrion</keyword>
<keyword id="KW-0999">Mitochondrion inner membrane</keyword>
<keyword id="KW-0679">Respiratory chain</keyword>
<keyword id="KW-0812">Transmembrane</keyword>
<keyword id="KW-1133">Transmembrane helix</keyword>
<keyword id="KW-0813">Transport</keyword>
<keyword id="KW-0830">Ubiquinone</keyword>